<sequence length="2014" mass="229900">MANRSLKKVIETSSNNGHDLLTWITTNLEKLICLKEVNDNEIQEVKEIHTQLDEFVRYISVLENTDDLELHSVFISLSQLYTISIWRLKDEYPGVVFDSAAFLTNVLCEEDVSIDDGDTDPNQKKKKKKSSTKKKKYIYSPAKDIACTILVQLFENFGSSISSLIPLLFNAIFKNLKKIMEKSKYYHATFMTTLLQLFNAILRNSNNDDKILDPATYAKFSKLSKTVFDSISTDEKDFSVTFVSVLIECWTAHFKQTNFIREHSHDIIETIYSRFTEGEIGVYGFANDETRIFTAKSLAEILFDYYFSKNILTLQEVWSIYVKIFLNCDTRDVESGCFESIIHLINLNLLADNTFLSNSKYLDIVLSLSGVFSSYEVNNRSMNTLSRYLRYFQHMHEVILPHLNDSAKTQMLYYILGCSDTYQSSSKSDSASNFKYSIDAKPETQWLTLLQLDFTYVLISDLGSTFTTEENTVKEIRDKLVDLATCEIFTIRVHTVEILKVFLNNCPEYLSETIENSLRALSTDFKSTGKFIFHKNHGHAFIIANLIKGAESDYISYELIMRITVFSTSFIKNNTTSTSSNLYFKGLLCWILLIGLMNYKDEQYLKLQIPQLFLFWKVLLTHTYTYHDEDELYKNLEIRNHALTCLLTYLSNTTIDKEMAKQVSYLLTKCSNFNHSIDLKSKNIDNALLHNENRILQVYLKLEKYINSDFNSSLLILIVKNFSDPNLYTESSSSVLGSLKDIGNRKVSNKDDMESNIVLESSINTLLRQNNGFAFGLSSKITGDRIVNLSMSSAYKYDESISGSWPSKDYNWYNIFEVEVSKPISPILSLDSLILLYGSGSYSQIDRYAPQVTTSLIDSSMELFSSVFPFLNSKIQYSIMETLNLSMFSKMTTPLRSVAVAANVCSALHNALRIMQENNLELDYSVGQLIIESIKKIQFFNDIFLTKIKADCVGLLTAAIARTLGDEERQKFLTEQSRIFIKNVADMDEPYLRMFHVLSLATIFKYNSQYANFEEYFDVIFALMRDPHPVVHSWSLKAMHILLEKHLVIDLKTAALLLSSMEELLVQDKYGIYGRSTLRCNYNRDFNSHVAIGEISRTLTETVGPNFLELNTKVLDSFRNITLSMLISNNILNSITSIKMFENIATFKMKNILNYEIFILASKSIIKSSIVTGIGSSYFDTTFTGSNELISRTSSLKGAFENFDLLTLLYKLQMEEFFMKEMENLSWRYLALFPNSGSVKNYFTEWILHTFKRDNHWFDKLYSIFNMSLGRLFQSYNRDVSALLEVNGLKKSSEKEIKGEEEESIANVNQLTDTDAGGLDSENLQWKSRQIILNLILMLCLESEKYENLLLALSNKIADLIKISFRGSTVRNEGMKLTGLHILNFVLKNYSTMRDPQVPGSSILEQQEAQITSALMPAFSKGSSPTVMSFAITVAAEVLASNIMPPDKLGRISQLLIDLLGNFKDPNSGIRIGEAIIVTPKAKRKIELAVLDAWAEVVQRSITSSNDALFSFTRKYWSILVPLWIISLREYMMIKYNDNDSTVQVKNDSKENSLIEPRSTKIELYEPVWLNFVEALGCTLDSDVQVILASLNDEELEYFLFILFSQCLEAIVKNIDDHSVKMQVLPALHNVLKSNLCIKSIFEDDIITEVVEIMDRLISTGDSKEEFLLVDIISDLIIGYSKCNATPETFLQDIDKLYELLRLLMTIISERLPFIKYNVLTSEEDDNEIKISPTDISLLKKTFIAFESNISNFDNMFKVDLYSCLLFIIGKIYECSHREVIIPIILPLFKALVKALTESEDEKNIVLLEIFYGSIKDVIYHKLDSKNKVATILILLSNGYSKLSFQELNQCANILSEALNNPATQPIALQGFKRIISNIFKYPLLQYFMKLVIKRFFQDIQTNDSLSQASIKTKLIIQFSEEVIKQDHQKASLSIALCLSFFAAYHSAYTEKIDNEVASGIVALAKLDKNSFKEAISSTISPQQKAIIGSVMEAYVKSQSLGSVEEAFQLKSFD</sequence>
<accession>P39526</accession>
<accession>D6VVY7</accession>
<proteinExistence type="evidence at protein level"/>
<feature type="chain" id="PRO_0000203015" description="AP-1 accessory protein LAA1">
    <location>
        <begin position="1"/>
        <end position="2014"/>
    </location>
</feature>
<keyword id="KW-0968">Cytoplasmic vesicle</keyword>
<keyword id="KW-0333">Golgi apparatus</keyword>
<keyword id="KW-0653">Protein transport</keyword>
<keyword id="KW-1185">Reference proteome</keyword>
<keyword id="KW-0813">Transport</keyword>
<name>LAA1_YEAST</name>
<evidence type="ECO:0000269" key="1">
    <source>
    </source>
</evidence>
<evidence type="ECO:0000269" key="2">
    <source>
    </source>
</evidence>
<evidence type="ECO:0000269" key="3">
    <source>
    </source>
</evidence>
<evidence type="ECO:0000269" key="4">
    <source>
    </source>
</evidence>
<evidence type="ECO:0000269" key="5">
    <source>
    </source>
</evidence>
<evidence type="ECO:0000269" key="6">
    <source>
    </source>
</evidence>
<evidence type="ECO:0000303" key="7">
    <source>
    </source>
</evidence>
<gene>
    <name evidence="7" type="primary">LAA1</name>
    <name type="ordered locus">YJL207C</name>
    <name type="ORF">HRD550</name>
    <name type="ORF">J0312</name>
</gene>
<reference key="1">
    <citation type="journal article" date="1994" name="Yeast">
        <title>The sequence of a 36 kb segment on the left arm of yeast chromosome X identifies 24 open reading frames including NUC1, PRP21 (SPP91), CDC6, CRY2, the gene for S24, a homologue to the aconitase gene ACO1 and two homologues to chromosome III genes.</title>
        <authorList>
            <person name="Purnelle B."/>
            <person name="Coster F."/>
            <person name="Goffeau A."/>
        </authorList>
    </citation>
    <scope>NUCLEOTIDE SEQUENCE [GENOMIC DNA]</scope>
    <source>
        <strain>ATCC 204508 / S288c</strain>
    </source>
</reference>
<reference key="2">
    <citation type="journal article" date="1996" name="EMBO J.">
        <title>Complete nucleotide sequence of Saccharomyces cerevisiae chromosome X.</title>
        <authorList>
            <person name="Galibert F."/>
            <person name="Alexandraki D."/>
            <person name="Baur A."/>
            <person name="Boles E."/>
            <person name="Chalwatzis N."/>
            <person name="Chuat J.-C."/>
            <person name="Coster F."/>
            <person name="Cziepluch C."/>
            <person name="de Haan M."/>
            <person name="Domdey H."/>
            <person name="Durand P."/>
            <person name="Entian K.-D."/>
            <person name="Gatius M."/>
            <person name="Goffeau A."/>
            <person name="Grivell L.A."/>
            <person name="Hennemann A."/>
            <person name="Herbert C.J."/>
            <person name="Heumann K."/>
            <person name="Hilger F."/>
            <person name="Hollenberg C.P."/>
            <person name="Huang M.-E."/>
            <person name="Jacq C."/>
            <person name="Jauniaux J.-C."/>
            <person name="Katsoulou C."/>
            <person name="Kirchrath L."/>
            <person name="Kleine K."/>
            <person name="Kordes E."/>
            <person name="Koetter P."/>
            <person name="Liebl S."/>
            <person name="Louis E.J."/>
            <person name="Manus V."/>
            <person name="Mewes H.-W."/>
            <person name="Miosga T."/>
            <person name="Obermaier B."/>
            <person name="Perea J."/>
            <person name="Pohl T.M."/>
            <person name="Portetelle D."/>
            <person name="Pujol A."/>
            <person name="Purnelle B."/>
            <person name="Ramezani Rad M."/>
            <person name="Rasmussen S.W."/>
            <person name="Rose M."/>
            <person name="Rossau R."/>
            <person name="Schaaff-Gerstenschlaeger I."/>
            <person name="Smits P.H.M."/>
            <person name="Scarcez T."/>
            <person name="Soriano N."/>
            <person name="To Van D."/>
            <person name="Tzermia M."/>
            <person name="Van Broekhoven A."/>
            <person name="Vandenbol M."/>
            <person name="Wedler H."/>
            <person name="von Wettstein D."/>
            <person name="Wambutt R."/>
            <person name="Zagulski M."/>
            <person name="Zollner A."/>
            <person name="Karpfinger-Hartl L."/>
        </authorList>
    </citation>
    <scope>NUCLEOTIDE SEQUENCE [LARGE SCALE GENOMIC DNA]</scope>
    <source>
        <strain>ATCC 204508 / S288c</strain>
    </source>
</reference>
<reference key="3">
    <citation type="journal article" date="2014" name="G3 (Bethesda)">
        <title>The reference genome sequence of Saccharomyces cerevisiae: Then and now.</title>
        <authorList>
            <person name="Engel S.R."/>
            <person name="Dietrich F.S."/>
            <person name="Fisk D.G."/>
            <person name="Binkley G."/>
            <person name="Balakrishnan R."/>
            <person name="Costanzo M.C."/>
            <person name="Dwight S.S."/>
            <person name="Hitz B.C."/>
            <person name="Karra K."/>
            <person name="Nash R.S."/>
            <person name="Weng S."/>
            <person name="Wong E.D."/>
            <person name="Lloyd P."/>
            <person name="Skrzypek M.S."/>
            <person name="Miyasato S.R."/>
            <person name="Simison M."/>
            <person name="Cherry J.M."/>
        </authorList>
    </citation>
    <scope>GENOME REANNOTATION</scope>
    <source>
        <strain>ATCC 204508 / S288c</strain>
    </source>
</reference>
<reference key="4">
    <citation type="journal article" date="1994" name="Yeast">
        <title>Sequence analysis of a 40.2 kb DNA fragment located near the left telomere of yeast chromosome X.</title>
        <authorList>
            <person name="Vandenbol M."/>
            <person name="Durand P."/>
            <person name="Bolle P.-A."/>
            <person name="Dion C."/>
            <person name="Portetelle D."/>
            <person name="Hilger F."/>
        </authorList>
    </citation>
    <scope>NUCLEOTIDE SEQUENCE [GENOMIC DNA] OF 1465-2014</scope>
    <source>
        <strain>ATCC 204508 / S288c</strain>
    </source>
</reference>
<reference key="5">
    <citation type="journal article" date="1999" name="Yeast">
        <title>Chemotyping of yeast mutants using robotics.</title>
        <authorList>
            <person name="Rieger K.-J."/>
            <person name="El-Alama M."/>
            <person name="Stein G."/>
            <person name="Bradshaw C."/>
            <person name="Slonimski P.P."/>
            <person name="Maundrell K."/>
        </authorList>
    </citation>
    <scope>DISRUPTION PHENOTYPE</scope>
    <scope>DRUG SENSITIVITY</scope>
</reference>
<reference key="6">
    <citation type="journal article" date="2003" name="Nature">
        <title>Global analysis of protein localization in budding yeast.</title>
        <authorList>
            <person name="Huh W.-K."/>
            <person name="Falvo J.V."/>
            <person name="Gerke L.C."/>
            <person name="Carroll A.S."/>
            <person name="Howson R.W."/>
            <person name="Weissman J.S."/>
            <person name="O'Shea E.K."/>
        </authorList>
    </citation>
    <scope>SUBCELLULAR LOCATION [LARGE SCALE ANALYSIS]</scope>
</reference>
<reference key="7">
    <citation type="journal article" date="2003" name="Nature">
        <title>Global analysis of protein expression in yeast.</title>
        <authorList>
            <person name="Ghaemmaghami S."/>
            <person name="Huh W.-K."/>
            <person name="Bower K."/>
            <person name="Howson R.W."/>
            <person name="Belle A."/>
            <person name="Dephoure N."/>
            <person name="O'Shea E.K."/>
            <person name="Weissman J.S."/>
        </authorList>
    </citation>
    <scope>LEVEL OF PROTEIN EXPRESSION [LARGE SCALE ANALYSIS]</scope>
</reference>
<reference key="8">
    <citation type="journal article" date="2006" name="Genes Dev.">
        <title>Systematic identification and functional screens of uncharacterized proteins associated with eukaryotic ribosomal complexes.</title>
        <authorList>
            <person name="Fleischer T.C."/>
            <person name="Weaver C.M."/>
            <person name="McAfee K.J."/>
            <person name="Jennings J.L."/>
            <person name="Link A.J."/>
        </authorList>
    </citation>
    <scope>SUBCELLULAR LOCATION</scope>
</reference>
<reference key="9">
    <citation type="journal article" date="2006" name="Mol. Biol. Cell">
        <title>Laa1p, a conserved AP-1 accessory protein important for AP-1 localization in yeast.</title>
        <authorList>
            <person name="Fernandez G.E."/>
            <person name="Payne G.S."/>
        </authorList>
    </citation>
    <scope>FUNCTION</scope>
    <scope>INTERACTION WITH AP-1</scope>
    <scope>SUBCELLULAR LOCATION</scope>
    <scope>DISRUPTION PHENOTYPE</scope>
</reference>
<reference key="10">
    <citation type="journal article" date="2019" name="J. Biol. Chem.">
        <title>Adaptor protein complex-1 (AP-1) is recruited by the HEATR5 protein Laa1 and its co-factor Laa2 in yeast.</title>
        <authorList>
            <person name="Zysnarski C.J."/>
            <person name="Lahiri S."/>
            <person name="Javed F.T."/>
            <person name="Martinez-Marquez J.Y."/>
            <person name="Trowbridge J.W."/>
            <person name="Duncan M.C."/>
        </authorList>
    </citation>
    <scope>FUNCTION</scope>
    <scope>SUBCELLULAR LOCATION</scope>
    <scope>INTERACTION WITH LAA2</scope>
    <scope>DISRUPTION PHENOTYPE</scope>
</reference>
<comment type="function">
    <text evidence="4 6">Involved in localization of clathrin adapter protein complex-1 (AP-1) and subsequent AP-1-mediated clathrin-coated vesicle cargo loading (PubMed:16687571, PubMed:30523155). In complex with LAA2, cooperates with the small GTPase ARF1 and the phosphatidyl-inositol-4-phosphate (PI4P) synthesis to confer temporal specificity to AP-1 recruitment (PubMed:30523155).</text>
</comment>
<comment type="subunit">
    <text evidence="4 6">Interacts with the clathrin-associated adapter complex AP-1 (PubMed:16687571). Interacts directly with LAA2 (PubMed:30523155).</text>
</comment>
<comment type="subcellular location">
    <subcellularLocation>
        <location evidence="2 4 5">Golgi apparatus</location>
    </subcellularLocation>
    <subcellularLocation>
        <location evidence="6">Cytoplasmic vesicle</location>
        <location evidence="6">Clathrin-coated vesicle</location>
    </subcellularLocation>
    <text evidence="5 6">Colocalizes with AP-1 adapter complex, with clathrin-coated vesicles to the late-Golgi apparatus and with ribosomes (PubMed:30523155). Localization depends on ADP-ribosylation factor (ARF) (PubMed:16702403).</text>
</comment>
<comment type="disruption phenotype">
    <text evidence="1 4 6">Deletion, when combined with a conditional mutation in clathrin heavy chain or deletion of GGA genes, accentuates growth defects and increases disruption of clathrin-dependent alpha-factor maturation and transport of carboxypeptidase Y to the vacuole. Causes mislocalization of AP-1, especially in cells at high density (postdiauxic shift), but doesn't affect GGA protein distribution (PubMed:16687571, PubMed:30523155). Sensitive to diltiazem-HCl and hypersensitive to chlorpromazine (PubMed:10407277).</text>
</comment>
<comment type="miscellaneous">
    <text evidence="3">Present with 300 molecules/cell in log phase SD medium.</text>
</comment>
<dbReference type="EMBL" id="X77688">
    <property type="protein sequence ID" value="CAA54749.1"/>
    <property type="molecule type" value="Genomic_DNA"/>
</dbReference>
<dbReference type="EMBL" id="Z34098">
    <property type="protein sequence ID" value="CAA84004.1"/>
    <property type="molecule type" value="Genomic_DNA"/>
</dbReference>
<dbReference type="EMBL" id="Z49482">
    <property type="protein sequence ID" value="CAA89504.1"/>
    <property type="molecule type" value="Genomic_DNA"/>
</dbReference>
<dbReference type="EMBL" id="BK006943">
    <property type="protein sequence ID" value="DAA08603.1"/>
    <property type="molecule type" value="Genomic_DNA"/>
</dbReference>
<dbReference type="PIR" id="S46622">
    <property type="entry name" value="S46622"/>
</dbReference>
<dbReference type="RefSeq" id="NP_012328.1">
    <property type="nucleotide sequence ID" value="NM_001181640.1"/>
</dbReference>
<dbReference type="BioGRID" id="33551">
    <property type="interactions" value="1122"/>
</dbReference>
<dbReference type="DIP" id="DIP-6552N"/>
<dbReference type="FunCoup" id="P39526">
    <property type="interactions" value="146"/>
</dbReference>
<dbReference type="IntAct" id="P39526">
    <property type="interactions" value="36"/>
</dbReference>
<dbReference type="MINT" id="P39526"/>
<dbReference type="STRING" id="4932.YJL207C"/>
<dbReference type="iPTMnet" id="P39526"/>
<dbReference type="PaxDb" id="4932-YJL207C"/>
<dbReference type="PeptideAtlas" id="P39526"/>
<dbReference type="EnsemblFungi" id="YJL207C_mRNA">
    <property type="protein sequence ID" value="YJL207C"/>
    <property type="gene ID" value="YJL207C"/>
</dbReference>
<dbReference type="GeneID" id="853223"/>
<dbReference type="KEGG" id="sce:YJL207C"/>
<dbReference type="AGR" id="SGD:S000003743"/>
<dbReference type="SGD" id="S000003743">
    <property type="gene designation" value="LAA1"/>
</dbReference>
<dbReference type="VEuPathDB" id="FungiDB:YJL207C"/>
<dbReference type="eggNOG" id="KOG1822">
    <property type="taxonomic scope" value="Eukaryota"/>
</dbReference>
<dbReference type="GeneTree" id="ENSGT00390000006205"/>
<dbReference type="HOGENOM" id="CLU_231814_0_0_1"/>
<dbReference type="InParanoid" id="P39526"/>
<dbReference type="OMA" id="WEFKLFI"/>
<dbReference type="OrthoDB" id="192608at2759"/>
<dbReference type="BioCyc" id="YEAST:G3O-31635-MONOMER"/>
<dbReference type="BioGRID-ORCS" id="853223">
    <property type="hits" value="2 hits in 10 CRISPR screens"/>
</dbReference>
<dbReference type="PRO" id="PR:P39526"/>
<dbReference type="Proteomes" id="UP000002311">
    <property type="component" value="Chromosome X"/>
</dbReference>
<dbReference type="RNAct" id="P39526">
    <property type="molecule type" value="protein"/>
</dbReference>
<dbReference type="GO" id="GO:0030136">
    <property type="term" value="C:clathrin-coated vesicle"/>
    <property type="evidence" value="ECO:0007005"/>
    <property type="project" value="SGD"/>
</dbReference>
<dbReference type="GO" id="GO:0005829">
    <property type="term" value="C:cytosol"/>
    <property type="evidence" value="ECO:0007669"/>
    <property type="project" value="GOC"/>
</dbReference>
<dbReference type="GO" id="GO:0030139">
    <property type="term" value="C:endocytic vesicle"/>
    <property type="evidence" value="ECO:0000318"/>
    <property type="project" value="GO_Central"/>
</dbReference>
<dbReference type="GO" id="GO:0005794">
    <property type="term" value="C:Golgi apparatus"/>
    <property type="evidence" value="ECO:0007669"/>
    <property type="project" value="UniProtKB-SubCell"/>
</dbReference>
<dbReference type="GO" id="GO:0035653">
    <property type="term" value="P:clathrin-coated vesicle cargo loading, AP-1-mediated"/>
    <property type="evidence" value="ECO:0000315"/>
    <property type="project" value="SGD"/>
</dbReference>
<dbReference type="GO" id="GO:0006897">
    <property type="term" value="P:endocytosis"/>
    <property type="evidence" value="ECO:0000318"/>
    <property type="project" value="GO_Central"/>
</dbReference>
<dbReference type="GO" id="GO:0008104">
    <property type="term" value="P:protein localization"/>
    <property type="evidence" value="ECO:0000315"/>
    <property type="project" value="SGD"/>
</dbReference>
<dbReference type="GO" id="GO:0015031">
    <property type="term" value="P:protein transport"/>
    <property type="evidence" value="ECO:0007669"/>
    <property type="project" value="UniProtKB-KW"/>
</dbReference>
<dbReference type="GO" id="GO:0042147">
    <property type="term" value="P:retrograde transport, endosome to Golgi"/>
    <property type="evidence" value="ECO:0000315"/>
    <property type="project" value="SGD"/>
</dbReference>
<dbReference type="InterPro" id="IPR016024">
    <property type="entry name" value="ARM-type_fold"/>
</dbReference>
<dbReference type="InterPro" id="IPR040108">
    <property type="entry name" value="Laa1/Sip1/HEATR5"/>
</dbReference>
<dbReference type="InterPro" id="IPR046837">
    <property type="entry name" value="Laa1/Sip1/HEATR5-like_HEAT"/>
</dbReference>
<dbReference type="PANTHER" id="PTHR21663:SF0">
    <property type="entry name" value="HEAT REPEAT-CONTAINING PROTEIN 5B"/>
    <property type="match status" value="1"/>
</dbReference>
<dbReference type="PANTHER" id="PTHR21663">
    <property type="entry name" value="HYPOTHETICAL HEAT DOMAIN-CONTAINING"/>
    <property type="match status" value="1"/>
</dbReference>
<dbReference type="Pfam" id="PF20210">
    <property type="entry name" value="Laa1_Sip1_HTR5"/>
    <property type="match status" value="1"/>
</dbReference>
<dbReference type="SUPFAM" id="SSF48371">
    <property type="entry name" value="ARM repeat"/>
    <property type="match status" value="3"/>
</dbReference>
<organism>
    <name type="scientific">Saccharomyces cerevisiae (strain ATCC 204508 / S288c)</name>
    <name type="common">Baker's yeast</name>
    <dbReference type="NCBI Taxonomy" id="559292"/>
    <lineage>
        <taxon>Eukaryota</taxon>
        <taxon>Fungi</taxon>
        <taxon>Dikarya</taxon>
        <taxon>Ascomycota</taxon>
        <taxon>Saccharomycotina</taxon>
        <taxon>Saccharomycetes</taxon>
        <taxon>Saccharomycetales</taxon>
        <taxon>Saccharomycetaceae</taxon>
        <taxon>Saccharomyces</taxon>
    </lineage>
</organism>
<protein>
    <recommendedName>
        <fullName evidence="7">AP-1 accessory protein LAA1</fullName>
    </recommendedName>
    <alternativeName>
        <fullName evidence="7">Large AP-1 accessory protein 1</fullName>
    </alternativeName>
</protein>